<sequence>VLSSADKANIKATWDKIGGHGGEYGAEALERTFLCFPTTKTYFPHFDLSHGSAQVKAHGKKVADALAVAAAHLDDLPAALSALSDLHAYKLRVDPVNFKLLSHCLLVTLAAHHPAEFTPAVHASLDKFLSSVSTVLTSKYR</sequence>
<keyword id="KW-0007">Acetylation</keyword>
<keyword id="KW-0903">Direct protein sequencing</keyword>
<keyword id="KW-0349">Heme</keyword>
<keyword id="KW-0408">Iron</keyword>
<keyword id="KW-0479">Metal-binding</keyword>
<keyword id="KW-0561">Oxygen transport</keyword>
<keyword id="KW-0597">Phosphoprotein</keyword>
<keyword id="KW-0813">Transport</keyword>
<reference key="1">
    <citation type="journal article" date="1991" name="Biol. Chem. Hoppe-Seyler">
        <title>The primary structure of the hemoglobin from the aardwolf (Proteles cristatus, Hyaenidae).</title>
        <authorList>
            <person name="Stoeva S."/>
            <person name="Kleinschmidt T."/>
            <person name="Braunitzer G."/>
            <person name="Scheil H.-G."/>
        </authorList>
    </citation>
    <scope>PROTEIN SEQUENCE</scope>
</reference>
<organism>
    <name type="scientific">Proteles cristata</name>
    <name type="common">Aardwolf</name>
    <dbReference type="NCBI Taxonomy" id="9680"/>
    <lineage>
        <taxon>Eukaryota</taxon>
        <taxon>Metazoa</taxon>
        <taxon>Chordata</taxon>
        <taxon>Craniata</taxon>
        <taxon>Vertebrata</taxon>
        <taxon>Euteleostomi</taxon>
        <taxon>Mammalia</taxon>
        <taxon>Eutheria</taxon>
        <taxon>Laurasiatheria</taxon>
        <taxon>Carnivora</taxon>
        <taxon>Feliformia</taxon>
        <taxon>Hyaenidae</taxon>
        <taxon>Proteles</taxon>
    </lineage>
</organism>
<protein>
    <recommendedName>
        <fullName>Hemoglobin subunit alpha</fullName>
    </recommendedName>
    <alternativeName>
        <fullName>Alpha-globin</fullName>
    </alternativeName>
    <alternativeName>
        <fullName>Hemoglobin alpha chain</fullName>
    </alternativeName>
    <component>
        <recommendedName>
            <fullName evidence="2">Hemopressin</fullName>
        </recommendedName>
    </component>
</protein>
<name>HBA_PROCR</name>
<comment type="function">
    <text>Involved in oxygen transport from the lung to the various peripheral tissues.</text>
</comment>
<comment type="function">
    <molecule>Hemopressin</molecule>
    <text evidence="2">Hemopressin acts as an antagonist peptide of the cannabinoid receptor CNR1. Hemopressin-binding efficiently blocks cannabinoid receptor CNR1 and subsequent signaling.</text>
</comment>
<comment type="subunit">
    <text>Heterotetramer of two alpha chains and two beta chains.</text>
</comment>
<comment type="tissue specificity">
    <text>Red blood cells.</text>
</comment>
<comment type="similarity">
    <text evidence="4">Belongs to the globin family.</text>
</comment>
<gene>
    <name type="primary">HBA</name>
</gene>
<dbReference type="PIR" id="S16109">
    <property type="entry name" value="S16109"/>
</dbReference>
<dbReference type="SMR" id="P23019"/>
<dbReference type="GO" id="GO:0072562">
    <property type="term" value="C:blood microparticle"/>
    <property type="evidence" value="ECO:0007669"/>
    <property type="project" value="TreeGrafter"/>
</dbReference>
<dbReference type="GO" id="GO:0031838">
    <property type="term" value="C:haptoglobin-hemoglobin complex"/>
    <property type="evidence" value="ECO:0007669"/>
    <property type="project" value="TreeGrafter"/>
</dbReference>
<dbReference type="GO" id="GO:0005833">
    <property type="term" value="C:hemoglobin complex"/>
    <property type="evidence" value="ECO:0007669"/>
    <property type="project" value="InterPro"/>
</dbReference>
<dbReference type="GO" id="GO:0031720">
    <property type="term" value="F:haptoglobin binding"/>
    <property type="evidence" value="ECO:0007669"/>
    <property type="project" value="TreeGrafter"/>
</dbReference>
<dbReference type="GO" id="GO:0020037">
    <property type="term" value="F:heme binding"/>
    <property type="evidence" value="ECO:0007669"/>
    <property type="project" value="InterPro"/>
</dbReference>
<dbReference type="GO" id="GO:0005506">
    <property type="term" value="F:iron ion binding"/>
    <property type="evidence" value="ECO:0007669"/>
    <property type="project" value="InterPro"/>
</dbReference>
<dbReference type="GO" id="GO:0043177">
    <property type="term" value="F:organic acid binding"/>
    <property type="evidence" value="ECO:0007669"/>
    <property type="project" value="TreeGrafter"/>
</dbReference>
<dbReference type="GO" id="GO:0019825">
    <property type="term" value="F:oxygen binding"/>
    <property type="evidence" value="ECO:0007669"/>
    <property type="project" value="InterPro"/>
</dbReference>
<dbReference type="GO" id="GO:0005344">
    <property type="term" value="F:oxygen carrier activity"/>
    <property type="evidence" value="ECO:0007669"/>
    <property type="project" value="UniProtKB-KW"/>
</dbReference>
<dbReference type="GO" id="GO:0004601">
    <property type="term" value="F:peroxidase activity"/>
    <property type="evidence" value="ECO:0007669"/>
    <property type="project" value="TreeGrafter"/>
</dbReference>
<dbReference type="GO" id="GO:0042744">
    <property type="term" value="P:hydrogen peroxide catabolic process"/>
    <property type="evidence" value="ECO:0007669"/>
    <property type="project" value="TreeGrafter"/>
</dbReference>
<dbReference type="CDD" id="cd08927">
    <property type="entry name" value="Hb-alpha-like"/>
    <property type="match status" value="1"/>
</dbReference>
<dbReference type="FunFam" id="1.10.490.10:FF:000002">
    <property type="entry name" value="Hemoglobin subunit alpha"/>
    <property type="match status" value="1"/>
</dbReference>
<dbReference type="Gene3D" id="1.10.490.10">
    <property type="entry name" value="Globins"/>
    <property type="match status" value="1"/>
</dbReference>
<dbReference type="InterPro" id="IPR000971">
    <property type="entry name" value="Globin"/>
</dbReference>
<dbReference type="InterPro" id="IPR009050">
    <property type="entry name" value="Globin-like_sf"/>
</dbReference>
<dbReference type="InterPro" id="IPR012292">
    <property type="entry name" value="Globin/Proto"/>
</dbReference>
<dbReference type="InterPro" id="IPR002338">
    <property type="entry name" value="Hemoglobin_a-typ"/>
</dbReference>
<dbReference type="InterPro" id="IPR050056">
    <property type="entry name" value="Hemoglobin_oxygen_transport"/>
</dbReference>
<dbReference type="InterPro" id="IPR002339">
    <property type="entry name" value="Hemoglobin_pi"/>
</dbReference>
<dbReference type="PANTHER" id="PTHR11442">
    <property type="entry name" value="HEMOGLOBIN FAMILY MEMBER"/>
    <property type="match status" value="1"/>
</dbReference>
<dbReference type="PANTHER" id="PTHR11442:SF48">
    <property type="entry name" value="HEMOGLOBIN SUBUNIT ALPHA"/>
    <property type="match status" value="1"/>
</dbReference>
<dbReference type="Pfam" id="PF00042">
    <property type="entry name" value="Globin"/>
    <property type="match status" value="1"/>
</dbReference>
<dbReference type="PRINTS" id="PR00612">
    <property type="entry name" value="ALPHAHAEM"/>
</dbReference>
<dbReference type="PRINTS" id="PR00815">
    <property type="entry name" value="PIHAEM"/>
</dbReference>
<dbReference type="SUPFAM" id="SSF46458">
    <property type="entry name" value="Globin-like"/>
    <property type="match status" value="1"/>
</dbReference>
<dbReference type="PROSITE" id="PS01033">
    <property type="entry name" value="GLOBIN"/>
    <property type="match status" value="1"/>
</dbReference>
<proteinExistence type="evidence at protein level"/>
<feature type="chain" id="PRO_0000052738" description="Hemoglobin subunit alpha">
    <location>
        <begin position="1"/>
        <end position="141"/>
    </location>
</feature>
<feature type="peptide" id="PRO_0000455930" description="Hemopressin" evidence="2">
    <location>
        <begin position="95"/>
        <end position="103"/>
    </location>
</feature>
<feature type="domain" description="Globin" evidence="4">
    <location>
        <begin position="1"/>
        <end position="141"/>
    </location>
</feature>
<feature type="binding site" evidence="4">
    <location>
        <position position="58"/>
    </location>
    <ligand>
        <name>O2</name>
        <dbReference type="ChEBI" id="CHEBI:15379"/>
    </ligand>
</feature>
<feature type="binding site" description="proximal binding residue" evidence="4">
    <location>
        <position position="87"/>
    </location>
    <ligand>
        <name>heme b</name>
        <dbReference type="ChEBI" id="CHEBI:60344"/>
    </ligand>
    <ligandPart>
        <name>Fe</name>
        <dbReference type="ChEBI" id="CHEBI:18248"/>
    </ligandPart>
</feature>
<feature type="modified residue" description="Phosphoserine" evidence="3">
    <location>
        <position position="3"/>
    </location>
</feature>
<feature type="modified residue" description="N6-succinyllysine" evidence="1">
    <location>
        <position position="7"/>
    </location>
</feature>
<feature type="modified residue" description="N6-succinyllysine" evidence="1">
    <location>
        <position position="11"/>
    </location>
</feature>
<feature type="modified residue" description="N6-acetyllysine; alternate" evidence="3">
    <location>
        <position position="16"/>
    </location>
</feature>
<feature type="modified residue" description="N6-succinyllysine; alternate" evidence="1">
    <location>
        <position position="16"/>
    </location>
</feature>
<feature type="modified residue" description="Phosphotyrosine" evidence="3">
    <location>
        <position position="24"/>
    </location>
</feature>
<feature type="modified residue" description="N6-succinyllysine" evidence="1">
    <location>
        <position position="40"/>
    </location>
</feature>
<feature type="modified residue" description="Phosphoserine" evidence="3">
    <location>
        <position position="49"/>
    </location>
</feature>
<feature type="modified residue" description="Phosphoserine" evidence="1">
    <location>
        <position position="102"/>
    </location>
</feature>
<feature type="modified residue" description="Phosphothreonine" evidence="1">
    <location>
        <position position="108"/>
    </location>
</feature>
<feature type="modified residue" description="Phosphoserine" evidence="1">
    <location>
        <position position="124"/>
    </location>
</feature>
<feature type="modified residue" description="Phosphoserine" evidence="1">
    <location>
        <position position="131"/>
    </location>
</feature>
<feature type="modified residue" description="Phosphothreonine" evidence="1">
    <location>
        <position position="134"/>
    </location>
</feature>
<feature type="modified residue" description="Phosphothreonine" evidence="1">
    <location>
        <position position="137"/>
    </location>
</feature>
<feature type="modified residue" description="Phosphoserine" evidence="1">
    <location>
        <position position="138"/>
    </location>
</feature>
<accession>P23019</accession>
<evidence type="ECO:0000250" key="1">
    <source>
        <dbReference type="UniProtKB" id="P01942"/>
    </source>
</evidence>
<evidence type="ECO:0000250" key="2">
    <source>
        <dbReference type="UniProtKB" id="P01946"/>
    </source>
</evidence>
<evidence type="ECO:0000250" key="3">
    <source>
        <dbReference type="UniProtKB" id="P69905"/>
    </source>
</evidence>
<evidence type="ECO:0000255" key="4">
    <source>
        <dbReference type="PROSITE-ProRule" id="PRU00238"/>
    </source>
</evidence>